<proteinExistence type="inferred from homology"/>
<sequence length="338" mass="39411">MELPILPTSVIGSYPKPRWLLRMYRLRDLGKIPEEDFKEAVKDASVSVLREHERAGVDIPWDGEMWRTEMTEHFTAKIGGFKFYGPVRVWGNAYFNKAAAVDKLEYKEPLVLEEFLWVKKNTTREVVKIPITGPYTIAEWSFNEYYPDKESFIMDLAKIINKELKMLENHGALYIQLDEPAMLNHPDEVPLAVEAINKAVKGIKIKVGLHVCYSNYYLLADYFDEIRVTQFALEFANRQFRDMDFLKKLSNKELGFGVVDVHNPRIESVEEIVKAIKKVFEYVEPELLYINPDCGMKLLDRNIAYNKLVNMVKATELVRKELEREGKKTTEFRTLKDI</sequence>
<evidence type="ECO:0000255" key="1">
    <source>
        <dbReference type="HAMAP-Rule" id="MF_00288"/>
    </source>
</evidence>
<evidence type="ECO:0000305" key="2"/>
<name>METE_PYRHO</name>
<organism>
    <name type="scientific">Pyrococcus horikoshii (strain ATCC 700860 / DSM 12428 / JCM 9974 / NBRC 100139 / OT-3)</name>
    <dbReference type="NCBI Taxonomy" id="70601"/>
    <lineage>
        <taxon>Archaea</taxon>
        <taxon>Methanobacteriati</taxon>
        <taxon>Methanobacteriota</taxon>
        <taxon>Thermococci</taxon>
        <taxon>Thermococcales</taxon>
        <taxon>Thermococcaceae</taxon>
        <taxon>Pyrococcus</taxon>
    </lineage>
</organism>
<gene>
    <name evidence="1" type="primary">metE</name>
    <name type="ordered locus">PH1089</name>
</gene>
<keyword id="KW-0028">Amino-acid biosynthesis</keyword>
<keyword id="KW-0479">Metal-binding</keyword>
<keyword id="KW-0486">Methionine biosynthesis</keyword>
<keyword id="KW-0489">Methyltransferase</keyword>
<keyword id="KW-0808">Transferase</keyword>
<keyword id="KW-0862">Zinc</keyword>
<feature type="chain" id="PRO_0000098689" description="Methionine synthase">
    <location>
        <begin position="1"/>
        <end position="338"/>
    </location>
</feature>
<feature type="binding site" evidence="1">
    <location>
        <position position="210"/>
    </location>
    <ligand>
        <name>Zn(2+)</name>
        <dbReference type="ChEBI" id="CHEBI:29105"/>
        <note>catalytic</note>
    </ligand>
</feature>
<feature type="binding site" evidence="1">
    <location>
        <position position="212"/>
    </location>
    <ligand>
        <name>Zn(2+)</name>
        <dbReference type="ChEBI" id="CHEBI:29105"/>
        <note>catalytic</note>
    </ligand>
</feature>
<feature type="binding site" evidence="1">
    <location>
        <position position="234"/>
    </location>
    <ligand>
        <name>Zn(2+)</name>
        <dbReference type="ChEBI" id="CHEBI:29105"/>
        <note>catalytic</note>
    </ligand>
</feature>
<feature type="binding site" evidence="1">
    <location>
        <position position="294"/>
    </location>
    <ligand>
        <name>Zn(2+)</name>
        <dbReference type="ChEBI" id="CHEBI:29105"/>
        <note>catalytic</note>
    </ligand>
</feature>
<accession>O58816</accession>
<comment type="function">
    <text evidence="1">Catalyzes the transfer of a methyl group to L-homocysteine resulting in methionine formation. The physiological methyl donor is unknown.</text>
</comment>
<comment type="cofactor">
    <cofactor evidence="1">
        <name>Zn(2+)</name>
        <dbReference type="ChEBI" id="CHEBI:29105"/>
    </cofactor>
    <text evidence="1">Binds 1 zinc ion per subunit.</text>
</comment>
<comment type="pathway">
    <text evidence="1">Amino-acid biosynthesis; L-methionine biosynthesis via de novo pathway.</text>
</comment>
<comment type="similarity">
    <text evidence="1 2">Belongs to the archaeal MetE family.</text>
</comment>
<protein>
    <recommendedName>
        <fullName evidence="1">Methionine synthase</fullName>
        <ecNumber evidence="1">2.1.1.-</ecNumber>
    </recommendedName>
    <alternativeName>
        <fullName evidence="1">Homocysteine methyltransferase</fullName>
    </alternativeName>
</protein>
<reference key="1">
    <citation type="journal article" date="1998" name="DNA Res.">
        <title>Complete sequence and gene organization of the genome of a hyper-thermophilic archaebacterium, Pyrococcus horikoshii OT3.</title>
        <authorList>
            <person name="Kawarabayasi Y."/>
            <person name="Sawada M."/>
            <person name="Horikawa H."/>
            <person name="Haikawa Y."/>
            <person name="Hino Y."/>
            <person name="Yamamoto S."/>
            <person name="Sekine M."/>
            <person name="Baba S."/>
            <person name="Kosugi H."/>
            <person name="Hosoyama A."/>
            <person name="Nagai Y."/>
            <person name="Sakai M."/>
            <person name="Ogura K."/>
            <person name="Otsuka R."/>
            <person name="Nakazawa H."/>
            <person name="Takamiya M."/>
            <person name="Ohfuku Y."/>
            <person name="Funahashi T."/>
            <person name="Tanaka T."/>
            <person name="Kudoh Y."/>
            <person name="Yamazaki J."/>
            <person name="Kushida N."/>
            <person name="Oguchi A."/>
            <person name="Aoki K."/>
            <person name="Yoshizawa T."/>
            <person name="Nakamura Y."/>
            <person name="Robb F.T."/>
            <person name="Horikoshi K."/>
            <person name="Masuchi Y."/>
            <person name="Shizuya H."/>
            <person name="Kikuchi H."/>
        </authorList>
    </citation>
    <scope>NUCLEOTIDE SEQUENCE [LARGE SCALE GENOMIC DNA]</scope>
    <source>
        <strain>ATCC 700860 / DSM 12428 / JCM 9974 / NBRC 100139 / OT-3</strain>
    </source>
</reference>
<dbReference type="EC" id="2.1.1.-" evidence="1"/>
<dbReference type="EMBL" id="BA000001">
    <property type="protein sequence ID" value="BAA30188.1"/>
    <property type="molecule type" value="Genomic_DNA"/>
</dbReference>
<dbReference type="PIR" id="F71103">
    <property type="entry name" value="F71103"/>
</dbReference>
<dbReference type="RefSeq" id="WP_010885175.1">
    <property type="nucleotide sequence ID" value="NC_000961.1"/>
</dbReference>
<dbReference type="SMR" id="O58816"/>
<dbReference type="STRING" id="70601.gene:9378048"/>
<dbReference type="DNASU" id="1443410"/>
<dbReference type="EnsemblBacteria" id="BAA30188">
    <property type="protein sequence ID" value="BAA30188"/>
    <property type="gene ID" value="BAA30188"/>
</dbReference>
<dbReference type="GeneID" id="1443410"/>
<dbReference type="KEGG" id="pho:PH1089"/>
<dbReference type="eggNOG" id="arCOG01876">
    <property type="taxonomic scope" value="Archaea"/>
</dbReference>
<dbReference type="OrthoDB" id="17656at2157"/>
<dbReference type="UniPathway" id="UPA00051"/>
<dbReference type="Proteomes" id="UP000000752">
    <property type="component" value="Chromosome"/>
</dbReference>
<dbReference type="GO" id="GO:0003871">
    <property type="term" value="F:5-methyltetrahydropteroyltriglutamate-homocysteine S-methyltransferase activity"/>
    <property type="evidence" value="ECO:0007669"/>
    <property type="project" value="InterPro"/>
</dbReference>
<dbReference type="GO" id="GO:0008270">
    <property type="term" value="F:zinc ion binding"/>
    <property type="evidence" value="ECO:0007669"/>
    <property type="project" value="InterPro"/>
</dbReference>
<dbReference type="GO" id="GO:0009086">
    <property type="term" value="P:methionine biosynthetic process"/>
    <property type="evidence" value="ECO:0007669"/>
    <property type="project" value="UniProtKB-UniRule"/>
</dbReference>
<dbReference type="GO" id="GO:0032259">
    <property type="term" value="P:methylation"/>
    <property type="evidence" value="ECO:0007669"/>
    <property type="project" value="UniProtKB-KW"/>
</dbReference>
<dbReference type="CDD" id="cd03311">
    <property type="entry name" value="CIMS_C_terminal_like"/>
    <property type="match status" value="1"/>
</dbReference>
<dbReference type="Gene3D" id="3.20.20.210">
    <property type="match status" value="1"/>
</dbReference>
<dbReference type="HAMAP" id="MF_00288">
    <property type="entry name" value="MetE"/>
    <property type="match status" value="1"/>
</dbReference>
<dbReference type="InterPro" id="IPR002629">
    <property type="entry name" value="Met_Synth_C/arc"/>
</dbReference>
<dbReference type="InterPro" id="IPR022921">
    <property type="entry name" value="MetE_arc"/>
</dbReference>
<dbReference type="InterPro" id="IPR038071">
    <property type="entry name" value="UROD/MetE-like_sf"/>
</dbReference>
<dbReference type="NCBIfam" id="NF003317">
    <property type="entry name" value="PRK04326.1"/>
    <property type="match status" value="1"/>
</dbReference>
<dbReference type="PANTHER" id="PTHR30519">
    <property type="entry name" value="5-METHYLTETRAHYDROPTEROYLTRIGLUTAMATE--HOMOCYSTEINE METHYLTRANSFERASE"/>
    <property type="match status" value="1"/>
</dbReference>
<dbReference type="Pfam" id="PF01717">
    <property type="entry name" value="Meth_synt_2"/>
    <property type="match status" value="1"/>
</dbReference>
<dbReference type="SUPFAM" id="SSF51726">
    <property type="entry name" value="UROD/MetE-like"/>
    <property type="match status" value="1"/>
</dbReference>